<dbReference type="EMBL" id="AY496943">
    <property type="protein sequence ID" value="AAR90858.1"/>
    <property type="molecule type" value="mRNA"/>
</dbReference>
<dbReference type="EMBL" id="AK011090">
    <property type="protein sequence ID" value="BAB27391.1"/>
    <property type="molecule type" value="mRNA"/>
</dbReference>
<dbReference type="EMBL" id="AK011645">
    <property type="status" value="NOT_ANNOTATED_CDS"/>
    <property type="molecule type" value="mRNA"/>
</dbReference>
<dbReference type="EMBL" id="AK011835">
    <property type="protein sequence ID" value="BAB27868.1"/>
    <property type="molecule type" value="mRNA"/>
</dbReference>
<dbReference type="EMBL" id="AK013105">
    <property type="protein sequence ID" value="BAB28650.1"/>
    <property type="molecule type" value="mRNA"/>
</dbReference>
<dbReference type="EMBL" id="AK017673">
    <property type="protein sequence ID" value="BAB30866.1"/>
    <property type="molecule type" value="mRNA"/>
</dbReference>
<dbReference type="EMBL" id="BC021413">
    <property type="protein sequence ID" value="AAH21413.1"/>
    <property type="molecule type" value="mRNA"/>
</dbReference>
<dbReference type="EMBL" id="BC096393">
    <property type="protein sequence ID" value="AAH96393.1"/>
    <property type="molecule type" value="mRNA"/>
</dbReference>
<dbReference type="CCDS" id="CCDS23299.1"/>
<dbReference type="RefSeq" id="NP_080791.2">
    <property type="nucleotide sequence ID" value="NM_026515.2"/>
</dbReference>
<dbReference type="SMR" id="Q9CQX4"/>
<dbReference type="BioGRID" id="212606">
    <property type="interactions" value="2"/>
</dbReference>
<dbReference type="FunCoup" id="Q9CQX4">
    <property type="interactions" value="1504"/>
</dbReference>
<dbReference type="IntAct" id="Q9CQX4">
    <property type="interactions" value="1"/>
</dbReference>
<dbReference type="MINT" id="Q9CQX4"/>
<dbReference type="STRING" id="10090.ENSMUSP00000038877"/>
<dbReference type="GlyGen" id="Q9CQX4">
    <property type="glycosylation" value="1 site, 1 O-linked glycan (1 site)"/>
</dbReference>
<dbReference type="iPTMnet" id="Q9CQX4"/>
<dbReference type="PhosphoSitePlus" id="Q9CQX4"/>
<dbReference type="jPOST" id="Q9CQX4"/>
<dbReference type="PaxDb" id="10090-ENSMUSP00000038877"/>
<dbReference type="PeptideAtlas" id="Q9CQX4"/>
<dbReference type="ProteomicsDB" id="287937"/>
<dbReference type="Pumba" id="Q9CQX4"/>
<dbReference type="DNASU" id="68026"/>
<dbReference type="Ensembl" id="ENSMUST00000045802.7">
    <property type="protein sequence ID" value="ENSMUSP00000038877.7"/>
    <property type="gene ID" value="ENSMUSG00000040204.7"/>
</dbReference>
<dbReference type="GeneID" id="68026"/>
<dbReference type="KEGG" id="mmu:68026"/>
<dbReference type="UCSC" id="uc009qeb.1">
    <property type="organism name" value="mouse"/>
</dbReference>
<dbReference type="AGR" id="MGI:1915276"/>
<dbReference type="CTD" id="9768"/>
<dbReference type="MGI" id="MGI:1915276">
    <property type="gene designation" value="Pclaf"/>
</dbReference>
<dbReference type="VEuPathDB" id="HostDB:ENSMUSG00000040204"/>
<dbReference type="eggNOG" id="ENOG502S3UM">
    <property type="taxonomic scope" value="Eukaryota"/>
</dbReference>
<dbReference type="GeneTree" id="ENSGT00510000048252"/>
<dbReference type="HOGENOM" id="CLU_142343_0_0_1"/>
<dbReference type="InParanoid" id="Q9CQX4"/>
<dbReference type="OMA" id="QPDHTDE"/>
<dbReference type="OrthoDB" id="7479084at2759"/>
<dbReference type="PhylomeDB" id="Q9CQX4"/>
<dbReference type="TreeFam" id="TF333199"/>
<dbReference type="Reactome" id="R-MMU-5656169">
    <property type="pathway name" value="Termination of translesion DNA synthesis"/>
</dbReference>
<dbReference type="BioGRID-ORCS" id="68026">
    <property type="hits" value="6 hits in 113 CRISPR screens"/>
</dbReference>
<dbReference type="ChiTaRS" id="Pclaf">
    <property type="organism name" value="mouse"/>
</dbReference>
<dbReference type="PRO" id="PR:Q9CQX4"/>
<dbReference type="Proteomes" id="UP000000589">
    <property type="component" value="Chromosome 9"/>
</dbReference>
<dbReference type="RNAct" id="Q9CQX4">
    <property type="molecule type" value="protein"/>
</dbReference>
<dbReference type="Bgee" id="ENSMUSG00000040204">
    <property type="expression patterns" value="Expressed in yolk sac and 166 other cell types or tissues"/>
</dbReference>
<dbReference type="GO" id="GO:0005813">
    <property type="term" value="C:centrosome"/>
    <property type="evidence" value="ECO:0007669"/>
    <property type="project" value="Ensembl"/>
</dbReference>
<dbReference type="GO" id="GO:0005634">
    <property type="term" value="C:nucleus"/>
    <property type="evidence" value="ECO:0000250"/>
    <property type="project" value="UniProtKB"/>
</dbReference>
<dbReference type="GO" id="GO:0048471">
    <property type="term" value="C:perinuclear region of cytoplasm"/>
    <property type="evidence" value="ECO:0000250"/>
    <property type="project" value="UniProtKB"/>
</dbReference>
<dbReference type="GO" id="GO:0003682">
    <property type="term" value="F:chromatin binding"/>
    <property type="evidence" value="ECO:0000250"/>
    <property type="project" value="UniProtKB"/>
</dbReference>
<dbReference type="GO" id="GO:0060090">
    <property type="term" value="F:molecular adaptor activity"/>
    <property type="evidence" value="ECO:0007669"/>
    <property type="project" value="Ensembl"/>
</dbReference>
<dbReference type="GO" id="GO:0007098">
    <property type="term" value="P:centrosome cycle"/>
    <property type="evidence" value="ECO:0000250"/>
    <property type="project" value="UniProtKB"/>
</dbReference>
<dbReference type="GO" id="GO:0006974">
    <property type="term" value="P:DNA damage response"/>
    <property type="evidence" value="ECO:0000250"/>
    <property type="project" value="UniProtKB"/>
</dbReference>
<dbReference type="GO" id="GO:0006260">
    <property type="term" value="P:DNA replication"/>
    <property type="evidence" value="ECO:0000250"/>
    <property type="project" value="UniProtKB"/>
</dbReference>
<dbReference type="GO" id="GO:0051726">
    <property type="term" value="P:regulation of cell cycle"/>
    <property type="evidence" value="ECO:0000250"/>
    <property type="project" value="UniProtKB"/>
</dbReference>
<dbReference type="GO" id="GO:0009411">
    <property type="term" value="P:response to UV"/>
    <property type="evidence" value="ECO:0000250"/>
    <property type="project" value="UniProtKB"/>
</dbReference>
<dbReference type="GO" id="GO:0019985">
    <property type="term" value="P:translesion synthesis"/>
    <property type="evidence" value="ECO:0000250"/>
    <property type="project" value="UniProtKB"/>
</dbReference>
<dbReference type="InterPro" id="IPR040444">
    <property type="entry name" value="PCNA-AF"/>
</dbReference>
<dbReference type="InterPro" id="IPR031444">
    <property type="entry name" value="PCNA-AF_dom"/>
</dbReference>
<dbReference type="PANTHER" id="PTHR15679">
    <property type="entry name" value="PCNA-ASSOCIATED FACTOR"/>
    <property type="match status" value="1"/>
</dbReference>
<dbReference type="PANTHER" id="PTHR15679:SF8">
    <property type="entry name" value="PCNA-ASSOCIATED FACTOR"/>
    <property type="match status" value="1"/>
</dbReference>
<dbReference type="Pfam" id="PF15715">
    <property type="entry name" value="PAF"/>
    <property type="match status" value="1"/>
</dbReference>
<sequence length="110" mass="11993">MVRTKANYVPGAYRKAVASQAPRKVLGSSTFVTNSSSSSRKAENKYAGGNPVCVRPTPKWQKGIGEFFRLSPKESKKENQAPEEAGTSGLGKAKRKACPLQPDHRDDENE</sequence>
<reference key="1">
    <citation type="submission" date="2003-12" db="EMBL/GenBank/DDBJ databases">
        <title>Mus musculus homologous cDNA to Homo sapiens NS5ATP9 gene.</title>
        <authorList>
            <person name="Cheng J."/>
            <person name="Liu Y."/>
            <person name="Li Q."/>
        </authorList>
    </citation>
    <scope>NUCLEOTIDE SEQUENCE [MRNA]</scope>
</reference>
<reference key="2">
    <citation type="journal article" date="2005" name="Science">
        <title>The transcriptional landscape of the mammalian genome.</title>
        <authorList>
            <person name="Carninci P."/>
            <person name="Kasukawa T."/>
            <person name="Katayama S."/>
            <person name="Gough J."/>
            <person name="Frith M.C."/>
            <person name="Maeda N."/>
            <person name="Oyama R."/>
            <person name="Ravasi T."/>
            <person name="Lenhard B."/>
            <person name="Wells C."/>
            <person name="Kodzius R."/>
            <person name="Shimokawa K."/>
            <person name="Bajic V.B."/>
            <person name="Brenner S.E."/>
            <person name="Batalov S."/>
            <person name="Forrest A.R."/>
            <person name="Zavolan M."/>
            <person name="Davis M.J."/>
            <person name="Wilming L.G."/>
            <person name="Aidinis V."/>
            <person name="Allen J.E."/>
            <person name="Ambesi-Impiombato A."/>
            <person name="Apweiler R."/>
            <person name="Aturaliya R.N."/>
            <person name="Bailey T.L."/>
            <person name="Bansal M."/>
            <person name="Baxter L."/>
            <person name="Beisel K.W."/>
            <person name="Bersano T."/>
            <person name="Bono H."/>
            <person name="Chalk A.M."/>
            <person name="Chiu K.P."/>
            <person name="Choudhary V."/>
            <person name="Christoffels A."/>
            <person name="Clutterbuck D.R."/>
            <person name="Crowe M.L."/>
            <person name="Dalla E."/>
            <person name="Dalrymple B.P."/>
            <person name="de Bono B."/>
            <person name="Della Gatta G."/>
            <person name="di Bernardo D."/>
            <person name="Down T."/>
            <person name="Engstrom P."/>
            <person name="Fagiolini M."/>
            <person name="Faulkner G."/>
            <person name="Fletcher C.F."/>
            <person name="Fukushima T."/>
            <person name="Furuno M."/>
            <person name="Futaki S."/>
            <person name="Gariboldi M."/>
            <person name="Georgii-Hemming P."/>
            <person name="Gingeras T.R."/>
            <person name="Gojobori T."/>
            <person name="Green R.E."/>
            <person name="Gustincich S."/>
            <person name="Harbers M."/>
            <person name="Hayashi Y."/>
            <person name="Hensch T.K."/>
            <person name="Hirokawa N."/>
            <person name="Hill D."/>
            <person name="Huminiecki L."/>
            <person name="Iacono M."/>
            <person name="Ikeo K."/>
            <person name="Iwama A."/>
            <person name="Ishikawa T."/>
            <person name="Jakt M."/>
            <person name="Kanapin A."/>
            <person name="Katoh M."/>
            <person name="Kawasawa Y."/>
            <person name="Kelso J."/>
            <person name="Kitamura H."/>
            <person name="Kitano H."/>
            <person name="Kollias G."/>
            <person name="Krishnan S.P."/>
            <person name="Kruger A."/>
            <person name="Kummerfeld S.K."/>
            <person name="Kurochkin I.V."/>
            <person name="Lareau L.F."/>
            <person name="Lazarevic D."/>
            <person name="Lipovich L."/>
            <person name="Liu J."/>
            <person name="Liuni S."/>
            <person name="McWilliam S."/>
            <person name="Madan Babu M."/>
            <person name="Madera M."/>
            <person name="Marchionni L."/>
            <person name="Matsuda H."/>
            <person name="Matsuzawa S."/>
            <person name="Miki H."/>
            <person name="Mignone F."/>
            <person name="Miyake S."/>
            <person name="Morris K."/>
            <person name="Mottagui-Tabar S."/>
            <person name="Mulder N."/>
            <person name="Nakano N."/>
            <person name="Nakauchi H."/>
            <person name="Ng P."/>
            <person name="Nilsson R."/>
            <person name="Nishiguchi S."/>
            <person name="Nishikawa S."/>
            <person name="Nori F."/>
            <person name="Ohara O."/>
            <person name="Okazaki Y."/>
            <person name="Orlando V."/>
            <person name="Pang K.C."/>
            <person name="Pavan W.J."/>
            <person name="Pavesi G."/>
            <person name="Pesole G."/>
            <person name="Petrovsky N."/>
            <person name="Piazza S."/>
            <person name="Reed J."/>
            <person name="Reid J.F."/>
            <person name="Ring B.Z."/>
            <person name="Ringwald M."/>
            <person name="Rost B."/>
            <person name="Ruan Y."/>
            <person name="Salzberg S.L."/>
            <person name="Sandelin A."/>
            <person name="Schneider C."/>
            <person name="Schoenbach C."/>
            <person name="Sekiguchi K."/>
            <person name="Semple C.A."/>
            <person name="Seno S."/>
            <person name="Sessa L."/>
            <person name="Sheng Y."/>
            <person name="Shibata Y."/>
            <person name="Shimada H."/>
            <person name="Shimada K."/>
            <person name="Silva D."/>
            <person name="Sinclair B."/>
            <person name="Sperling S."/>
            <person name="Stupka E."/>
            <person name="Sugiura K."/>
            <person name="Sultana R."/>
            <person name="Takenaka Y."/>
            <person name="Taki K."/>
            <person name="Tammoja K."/>
            <person name="Tan S.L."/>
            <person name="Tang S."/>
            <person name="Taylor M.S."/>
            <person name="Tegner J."/>
            <person name="Teichmann S.A."/>
            <person name="Ueda H.R."/>
            <person name="van Nimwegen E."/>
            <person name="Verardo R."/>
            <person name="Wei C.L."/>
            <person name="Yagi K."/>
            <person name="Yamanishi H."/>
            <person name="Zabarovsky E."/>
            <person name="Zhu S."/>
            <person name="Zimmer A."/>
            <person name="Hide W."/>
            <person name="Bult C."/>
            <person name="Grimmond S.M."/>
            <person name="Teasdale R.D."/>
            <person name="Liu E.T."/>
            <person name="Brusic V."/>
            <person name="Quackenbush J."/>
            <person name="Wahlestedt C."/>
            <person name="Mattick J.S."/>
            <person name="Hume D.A."/>
            <person name="Kai C."/>
            <person name="Sasaki D."/>
            <person name="Tomaru Y."/>
            <person name="Fukuda S."/>
            <person name="Kanamori-Katayama M."/>
            <person name="Suzuki M."/>
            <person name="Aoki J."/>
            <person name="Arakawa T."/>
            <person name="Iida J."/>
            <person name="Imamura K."/>
            <person name="Itoh M."/>
            <person name="Kato T."/>
            <person name="Kawaji H."/>
            <person name="Kawagashira N."/>
            <person name="Kawashima T."/>
            <person name="Kojima M."/>
            <person name="Kondo S."/>
            <person name="Konno H."/>
            <person name="Nakano K."/>
            <person name="Ninomiya N."/>
            <person name="Nishio T."/>
            <person name="Okada M."/>
            <person name="Plessy C."/>
            <person name="Shibata K."/>
            <person name="Shiraki T."/>
            <person name="Suzuki S."/>
            <person name="Tagami M."/>
            <person name="Waki K."/>
            <person name="Watahiki A."/>
            <person name="Okamura-Oho Y."/>
            <person name="Suzuki H."/>
            <person name="Kawai J."/>
            <person name="Hayashizaki Y."/>
        </authorList>
    </citation>
    <scope>NUCLEOTIDE SEQUENCE [LARGE SCALE MRNA]</scope>
    <source>
        <strain>C57BL/6J</strain>
        <tissue>Liver</tissue>
    </source>
</reference>
<reference key="3">
    <citation type="journal article" date="2004" name="Genome Res.">
        <title>The status, quality, and expansion of the NIH full-length cDNA project: the Mammalian Gene Collection (MGC).</title>
        <authorList>
            <consortium name="The MGC Project Team"/>
        </authorList>
    </citation>
    <scope>NUCLEOTIDE SEQUENCE [LARGE SCALE MRNA]</scope>
    <source>
        <strain>C57BL/6J</strain>
        <strain>FVB/N</strain>
        <tissue>Mammary tumor</tissue>
    </source>
</reference>
<reference key="4">
    <citation type="journal article" date="2013" name="Mol. Cell">
        <title>SIRT5-mediated lysine desuccinylation impacts diverse metabolic pathways.</title>
        <authorList>
            <person name="Park J."/>
            <person name="Chen Y."/>
            <person name="Tishkoff D.X."/>
            <person name="Peng C."/>
            <person name="Tan M."/>
            <person name="Dai L."/>
            <person name="Xie Z."/>
            <person name="Zhang Y."/>
            <person name="Zwaans B.M."/>
            <person name="Skinner M.E."/>
            <person name="Lombard D.B."/>
            <person name="Zhao Y."/>
        </authorList>
    </citation>
    <scope>ACETYLATION [LARGE SCALE ANALYSIS] AT LYS-24</scope>
    <scope>IDENTIFICATION BY MASS SPECTROMETRY [LARGE SCALE ANALYSIS]</scope>
    <source>
        <tissue>Embryonic fibroblast</tissue>
    </source>
</reference>
<proteinExistence type="evidence at protein level"/>
<gene>
    <name evidence="2" type="primary">Pclaf</name>
    <name type="synonym">Ns5atp9</name>
    <name type="synonym">Paf</name>
</gene>
<name>PAF15_MOUSE</name>
<accession>Q9CQX4</accession>
<accession>Q4VAG2</accession>
<accession>Q9CZ17</accession>
<accession>Q9D0A5</accession>
<organism>
    <name type="scientific">Mus musculus</name>
    <name type="common">Mouse</name>
    <dbReference type="NCBI Taxonomy" id="10090"/>
    <lineage>
        <taxon>Eukaryota</taxon>
        <taxon>Metazoa</taxon>
        <taxon>Chordata</taxon>
        <taxon>Craniata</taxon>
        <taxon>Vertebrata</taxon>
        <taxon>Euteleostomi</taxon>
        <taxon>Mammalia</taxon>
        <taxon>Eutheria</taxon>
        <taxon>Euarchontoglires</taxon>
        <taxon>Glires</taxon>
        <taxon>Rodentia</taxon>
        <taxon>Myomorpha</taxon>
        <taxon>Muroidea</taxon>
        <taxon>Muridae</taxon>
        <taxon>Murinae</taxon>
        <taxon>Mus</taxon>
        <taxon>Mus</taxon>
    </lineage>
</organism>
<feature type="chain" id="PRO_0000096685" description="PCNA-associated factor">
    <location>
        <begin position="1"/>
        <end position="110"/>
    </location>
</feature>
<feature type="region of interest" description="Disordered" evidence="3">
    <location>
        <begin position="28"/>
        <end position="110"/>
    </location>
</feature>
<feature type="short sequence motif" description="D-box">
    <location>
        <begin position="23"/>
        <end position="34"/>
    </location>
</feature>
<feature type="short sequence motif" description="PIP-box">
    <location>
        <begin position="61"/>
        <end position="71"/>
    </location>
</feature>
<feature type="short sequence motif" description="KEN box">
    <location>
        <begin position="77"/>
        <end position="79"/>
    </location>
</feature>
<feature type="short sequence motif" description="Initiation motif">
    <location>
        <begin position="84"/>
        <end position="96"/>
    </location>
</feature>
<feature type="compositionally biased region" description="Low complexity" evidence="3">
    <location>
        <begin position="28"/>
        <end position="39"/>
    </location>
</feature>
<feature type="compositionally biased region" description="Basic and acidic residues" evidence="3">
    <location>
        <begin position="71"/>
        <end position="80"/>
    </location>
</feature>
<feature type="modified residue" description="N6-acetyllysine; alternate" evidence="5">
    <location>
        <position position="24"/>
    </location>
</feature>
<feature type="modified residue" description="Phosphoserine" evidence="2">
    <location>
        <position position="28"/>
    </location>
</feature>
<feature type="modified residue" description="Phosphoserine" evidence="2">
    <location>
        <position position="71"/>
    </location>
</feature>
<feature type="cross-link" description="Glycyl lysine isopeptide (Lys-Gly) (interchain with G-Cter in ubiquitin)" evidence="2">
    <location>
        <position position="15"/>
    </location>
</feature>
<feature type="cross-link" description="Glycyl lysine isopeptide (Lys-Gly) (interchain with G-Cter in ubiquitin); alternate" evidence="2">
    <location>
        <position position="24"/>
    </location>
</feature>
<feature type="sequence conflict" description="In Ref. 2; BAB28650." evidence="4" ref="2">
    <original>R</original>
    <variation>G</variation>
    <location>
        <position position="40"/>
    </location>
</feature>
<feature type="sequence conflict" description="In Ref. 2; AK011645." evidence="4" ref="2">
    <original>P</original>
    <variation>Q</variation>
    <location>
        <position position="51"/>
    </location>
</feature>
<comment type="function">
    <text evidence="1">PCNA-binding protein that acts as a regulator of DNA repair during DNA replication. Following DNA damage, the interaction with PCNA is disrupted, facilitating the interaction between monoubiquitinated PCNA and the translesion DNA synthesis DNA polymerase eta (POLH) at stalled replisomes, facilitating the bypass of replication-fork-blocking lesions. Also acts as a regulator of centrosome number (By similarity).</text>
</comment>
<comment type="subunit">
    <text evidence="1">Interacts (when monoubiquitinated at Lys-15 and Lys-24) with PCNA. Interacts with isoform 2/p33ING1b of ING1. Interacts with BRCA1 (By similarity).</text>
</comment>
<comment type="subcellular location">
    <subcellularLocation>
        <location evidence="2">Nucleus</location>
    </subcellularLocation>
    <subcellularLocation>
        <location evidence="2">Cytoplasm</location>
        <location evidence="2">Perinuclear region</location>
    </subcellularLocation>
    <text evidence="2">Following DNA damage, localizes to DNA damage sites. Colocalizes with centrosomes in perinuclear region.</text>
</comment>
<comment type="domain">
    <text evidence="1">The PIP-box mediates the interaction with PCNA.</text>
</comment>
<comment type="domain">
    <text evidence="1">The KEN box is required for the association with the APC/C complex.</text>
</comment>
<comment type="domain">
    <text evidence="1">The D-box (destruction box) mediates the interaction with APC/C proteins, and acts as a recognition signal for degradation via the ubiquitin-proteasome pathway.</text>
</comment>
<comment type="domain">
    <text evidence="1">The initiation motif is required for efficient chain initiation by the APC/C complex E2 ligase UBE2C. It determines the rate of substrate's degradation without affecting its affinity for the APC/C, a mechanism used by the APC/C to control the timing of substrate proteolysis during the cell cycle (By similarity).</text>
</comment>
<comment type="PTM">
    <text evidence="1">Monoubiquitinated at Lys-15 and Lys-24 during normal S phase, promoting its association with PCNA. Also diubiquitinated at these 2 sites. Following DNA damage, monoubiquitin chains at Lys-15 and Lys-24 are probably extended, leading to disrupt the interaction with PCNA. Polyubiquitinated by the APC/C complex at the mitotic exit, leading to its degradation by the proteasome (By similarity).</text>
</comment>
<evidence type="ECO:0000250" key="1"/>
<evidence type="ECO:0000250" key="2">
    <source>
        <dbReference type="UniProtKB" id="Q15004"/>
    </source>
</evidence>
<evidence type="ECO:0000256" key="3">
    <source>
        <dbReference type="SAM" id="MobiDB-lite"/>
    </source>
</evidence>
<evidence type="ECO:0000305" key="4"/>
<evidence type="ECO:0007744" key="5">
    <source>
    </source>
</evidence>
<protein>
    <recommendedName>
        <fullName evidence="4">PCNA-associated factor</fullName>
    </recommendedName>
    <alternativeName>
        <fullName>HCV NS5A-transactivated protein 9 homolog</fullName>
    </alternativeName>
    <alternativeName>
        <fullName>PCNA-associated factor of 15 kDa</fullName>
        <shortName>PAF15</shortName>
        <shortName>p15PAF</shortName>
    </alternativeName>
    <alternativeName>
        <fullName evidence="2">PCNA-clamp-associated factor</fullName>
    </alternativeName>
</protein>
<keyword id="KW-0007">Acetylation</keyword>
<keyword id="KW-0963">Cytoplasm</keyword>
<keyword id="KW-0227">DNA damage</keyword>
<keyword id="KW-0234">DNA repair</keyword>
<keyword id="KW-1017">Isopeptide bond</keyword>
<keyword id="KW-0539">Nucleus</keyword>
<keyword id="KW-0597">Phosphoprotein</keyword>
<keyword id="KW-1185">Reference proteome</keyword>
<keyword id="KW-0832">Ubl conjugation</keyword>